<gene>
    <name type="primary">PMCH</name>
</gene>
<comment type="subcellular location">
    <subcellularLocation>
        <location evidence="1">Secreted</location>
    </subcellularLocation>
</comment>
<comment type="similarity">
    <text evidence="3">Belongs to the melanin-concentrating hormone family.</text>
</comment>
<accession>O62689</accession>
<sequence length="71" mass="7942">AKMNLSSYILILTFSLFSQGILLSASKSIRNSDDDMVFNTFRLGKAFQKEDTAEKSVIAPSLEEYKNDESS</sequence>
<protein>
    <recommendedName>
        <fullName>Pro-MCH</fullName>
    </recommendedName>
</protein>
<reference key="1">
    <citation type="journal article" date="1998" name="Mol. Biol. Evol.">
        <title>Emergence of a brain-expressed variant melanin-concentrating hormone gene during higher primate evolution: a gene 'in search of a function'.</title>
        <authorList>
            <person name="Viale A."/>
            <person name="Ortola C."/>
            <person name="Richard F."/>
            <person name="Vernier P."/>
            <person name="Presse F."/>
            <person name="Schilling S."/>
            <person name="Dutrillaux B."/>
            <person name="Nahon J.-L."/>
        </authorList>
    </citation>
    <scope>NUCLEOTIDE SEQUENCE [GENOMIC DNA]</scope>
</reference>
<dbReference type="EMBL" id="AF029397">
    <property type="protein sequence ID" value="AAC05250.1"/>
    <property type="molecule type" value="Genomic_DNA"/>
</dbReference>
<dbReference type="STRING" id="9598.ENSPTRP00000009113"/>
<dbReference type="PaxDb" id="9598-ENSPTRP00000009113"/>
<dbReference type="eggNOG" id="ENOG502RZ12">
    <property type="taxonomic scope" value="Eukaryota"/>
</dbReference>
<dbReference type="InParanoid" id="O62689"/>
<dbReference type="Proteomes" id="UP000002277">
    <property type="component" value="Unplaced"/>
</dbReference>
<dbReference type="GO" id="GO:0005576">
    <property type="term" value="C:extracellular region"/>
    <property type="evidence" value="ECO:0007669"/>
    <property type="project" value="UniProtKB-SubCell"/>
</dbReference>
<dbReference type="GO" id="GO:0045202">
    <property type="term" value="C:synapse"/>
    <property type="evidence" value="ECO:0007669"/>
    <property type="project" value="GOC"/>
</dbReference>
<dbReference type="GO" id="GO:0030354">
    <property type="term" value="F:melanin-concentrating hormone activity"/>
    <property type="evidence" value="ECO:0007669"/>
    <property type="project" value="InterPro"/>
</dbReference>
<dbReference type="GO" id="GO:0007268">
    <property type="term" value="P:chemical synaptic transmission"/>
    <property type="evidence" value="ECO:0007669"/>
    <property type="project" value="InterPro"/>
</dbReference>
<dbReference type="InterPro" id="IPR005456">
    <property type="entry name" value="Prepro-melanin_conc_hormone"/>
</dbReference>
<dbReference type="PANTHER" id="PTHR12091">
    <property type="entry name" value="MELANIN-CONCENTRATING HORMONE"/>
    <property type="match status" value="1"/>
</dbReference>
<dbReference type="PANTHER" id="PTHR12091:SF0">
    <property type="entry name" value="PRO-MCH"/>
    <property type="match status" value="1"/>
</dbReference>
<keyword id="KW-1185">Reference proteome</keyword>
<keyword id="KW-0964">Secreted</keyword>
<keyword id="KW-0732">Signal</keyword>
<name>MCH_PANTR</name>
<proteinExistence type="inferred from homology"/>
<feature type="signal peptide" evidence="2">
    <location>
        <begin position="1" status="less than"/>
        <end position="20"/>
    </location>
</feature>
<feature type="chain" id="PRO_0000019110" description="Pro-MCH">
    <location>
        <begin position="21"/>
        <end position="71" status="greater than"/>
    </location>
</feature>
<feature type="non-terminal residue">
    <location>
        <position position="1"/>
    </location>
</feature>
<feature type="non-terminal residue">
    <location>
        <position position="71"/>
    </location>
</feature>
<organism>
    <name type="scientific">Pan troglodytes</name>
    <name type="common">Chimpanzee</name>
    <dbReference type="NCBI Taxonomy" id="9598"/>
    <lineage>
        <taxon>Eukaryota</taxon>
        <taxon>Metazoa</taxon>
        <taxon>Chordata</taxon>
        <taxon>Craniata</taxon>
        <taxon>Vertebrata</taxon>
        <taxon>Euteleostomi</taxon>
        <taxon>Mammalia</taxon>
        <taxon>Eutheria</taxon>
        <taxon>Euarchontoglires</taxon>
        <taxon>Primates</taxon>
        <taxon>Haplorrhini</taxon>
        <taxon>Catarrhini</taxon>
        <taxon>Hominidae</taxon>
        <taxon>Pan</taxon>
    </lineage>
</organism>
<evidence type="ECO:0000250" key="1"/>
<evidence type="ECO:0000255" key="2"/>
<evidence type="ECO:0000305" key="3"/>